<proteinExistence type="evidence at transcript level"/>
<accession>Q9C6C3</accession>
<accession>Q8GWM9</accession>
<accession>Q9C964</accession>
<dbReference type="EMBL" id="AC018908">
    <property type="protein sequence ID" value="AAG51644.1"/>
    <property type="molecule type" value="Genomic_DNA"/>
</dbReference>
<dbReference type="EMBL" id="AC079675">
    <property type="protein sequence ID" value="AAG51867.1"/>
    <property type="molecule type" value="Genomic_DNA"/>
</dbReference>
<dbReference type="EMBL" id="CP002684">
    <property type="protein sequence ID" value="AEE33741.1"/>
    <property type="molecule type" value="Genomic_DNA"/>
</dbReference>
<dbReference type="EMBL" id="AK118751">
    <property type="protein sequence ID" value="BAC43344.1"/>
    <property type="status" value="ALT_SEQ"/>
    <property type="molecule type" value="mRNA"/>
</dbReference>
<dbReference type="PIR" id="A96634">
    <property type="entry name" value="A96634"/>
</dbReference>
<dbReference type="RefSeq" id="NP_176283.1">
    <property type="nucleotide sequence ID" value="NM_104767.4"/>
</dbReference>
<dbReference type="SMR" id="Q9C6C3"/>
<dbReference type="FunCoup" id="Q9C6C3">
    <property type="interactions" value="2565"/>
</dbReference>
<dbReference type="STRING" id="3702.Q9C6C3"/>
<dbReference type="iPTMnet" id="Q9C6C3"/>
<dbReference type="PaxDb" id="3702-AT1G60860.1"/>
<dbReference type="ProteomicsDB" id="244754"/>
<dbReference type="EnsemblPlants" id="AT1G60860.1">
    <property type="protein sequence ID" value="AT1G60860.1"/>
    <property type="gene ID" value="AT1G60860"/>
</dbReference>
<dbReference type="GeneID" id="842378"/>
<dbReference type="Gramene" id="AT1G60860.1">
    <property type="protein sequence ID" value="AT1G60860.1"/>
    <property type="gene ID" value="AT1G60860"/>
</dbReference>
<dbReference type="KEGG" id="ath:AT1G60860"/>
<dbReference type="Araport" id="AT1G60860"/>
<dbReference type="TAIR" id="AT1G60860">
    <property type="gene designation" value="AGD2"/>
</dbReference>
<dbReference type="eggNOG" id="KOG0521">
    <property type="taxonomic scope" value="Eukaryota"/>
</dbReference>
<dbReference type="HOGENOM" id="CLU_016029_1_0_1"/>
<dbReference type="InParanoid" id="Q9C6C3"/>
<dbReference type="OMA" id="RTIPYKN"/>
<dbReference type="PhylomeDB" id="Q9C6C3"/>
<dbReference type="PRO" id="PR:Q9C6C3"/>
<dbReference type="Proteomes" id="UP000006548">
    <property type="component" value="Chromosome 1"/>
</dbReference>
<dbReference type="ExpressionAtlas" id="Q9C6C3">
    <property type="expression patterns" value="baseline and differential"/>
</dbReference>
<dbReference type="GO" id="GO:0005737">
    <property type="term" value="C:cytoplasm"/>
    <property type="evidence" value="ECO:0007669"/>
    <property type="project" value="InterPro"/>
</dbReference>
<dbReference type="GO" id="GO:0005096">
    <property type="term" value="F:GTPase activator activity"/>
    <property type="evidence" value="ECO:0007669"/>
    <property type="project" value="UniProtKB-KW"/>
</dbReference>
<dbReference type="GO" id="GO:0008270">
    <property type="term" value="F:zinc ion binding"/>
    <property type="evidence" value="ECO:0007669"/>
    <property type="project" value="UniProtKB-KW"/>
</dbReference>
<dbReference type="CDD" id="cd08204">
    <property type="entry name" value="ArfGap"/>
    <property type="match status" value="1"/>
</dbReference>
<dbReference type="CDD" id="cd07606">
    <property type="entry name" value="BAR_SFC_plant"/>
    <property type="match status" value="1"/>
</dbReference>
<dbReference type="CDD" id="cd13250">
    <property type="entry name" value="PH_ACAP"/>
    <property type="match status" value="1"/>
</dbReference>
<dbReference type="FunFam" id="1.10.220.150:FF:000019">
    <property type="entry name" value="ADP-ribosylation factor GTPase-activating protein AGD1"/>
    <property type="match status" value="1"/>
</dbReference>
<dbReference type="Gene3D" id="1.25.40.20">
    <property type="entry name" value="Ankyrin repeat-containing domain"/>
    <property type="match status" value="1"/>
</dbReference>
<dbReference type="Gene3D" id="1.10.220.150">
    <property type="entry name" value="Arf GTPase activating protein"/>
    <property type="match status" value="1"/>
</dbReference>
<dbReference type="Gene3D" id="1.20.1270.60">
    <property type="entry name" value="Arfaptin homology (AH) domain/BAR domain"/>
    <property type="match status" value="1"/>
</dbReference>
<dbReference type="Gene3D" id="2.30.29.30">
    <property type="entry name" value="Pleckstrin-homology domain (PH domain)/Phosphotyrosine-binding domain (PTB)"/>
    <property type="match status" value="1"/>
</dbReference>
<dbReference type="InterPro" id="IPR045258">
    <property type="entry name" value="ACAP1/2/3-like"/>
</dbReference>
<dbReference type="InterPro" id="IPR035670">
    <property type="entry name" value="AGD1/2/3/4_BAR_plant"/>
</dbReference>
<dbReference type="InterPro" id="IPR027267">
    <property type="entry name" value="AH/BAR_dom_sf"/>
</dbReference>
<dbReference type="InterPro" id="IPR002110">
    <property type="entry name" value="Ankyrin_rpt"/>
</dbReference>
<dbReference type="InterPro" id="IPR036770">
    <property type="entry name" value="Ankyrin_rpt-contain_sf"/>
</dbReference>
<dbReference type="InterPro" id="IPR037278">
    <property type="entry name" value="ARFGAP/RecO"/>
</dbReference>
<dbReference type="InterPro" id="IPR001164">
    <property type="entry name" value="ArfGAP_dom"/>
</dbReference>
<dbReference type="InterPro" id="IPR038508">
    <property type="entry name" value="ArfGAP_dom_sf"/>
</dbReference>
<dbReference type="InterPro" id="IPR004148">
    <property type="entry name" value="BAR_dom"/>
</dbReference>
<dbReference type="InterPro" id="IPR011993">
    <property type="entry name" value="PH-like_dom_sf"/>
</dbReference>
<dbReference type="InterPro" id="IPR001849">
    <property type="entry name" value="PH_domain"/>
</dbReference>
<dbReference type="PANTHER" id="PTHR23180:SF244">
    <property type="entry name" value="ADP-RIBOSYLATION FACTOR GTPASE-ACTIVATING PROTEIN AGD2"/>
    <property type="match status" value="1"/>
</dbReference>
<dbReference type="PANTHER" id="PTHR23180">
    <property type="entry name" value="CENTAURIN/ARF"/>
    <property type="match status" value="1"/>
</dbReference>
<dbReference type="Pfam" id="PF12796">
    <property type="entry name" value="Ank_2"/>
    <property type="match status" value="1"/>
</dbReference>
<dbReference type="Pfam" id="PF01412">
    <property type="entry name" value="ArfGap"/>
    <property type="match status" value="1"/>
</dbReference>
<dbReference type="Pfam" id="PF16746">
    <property type="entry name" value="BAR_3"/>
    <property type="match status" value="1"/>
</dbReference>
<dbReference type="Pfam" id="PF00169">
    <property type="entry name" value="PH"/>
    <property type="match status" value="1"/>
</dbReference>
<dbReference type="PRINTS" id="PR00405">
    <property type="entry name" value="REVINTRACTNG"/>
</dbReference>
<dbReference type="SMART" id="SM00248">
    <property type="entry name" value="ANK"/>
    <property type="match status" value="2"/>
</dbReference>
<dbReference type="SMART" id="SM00105">
    <property type="entry name" value="ArfGap"/>
    <property type="match status" value="1"/>
</dbReference>
<dbReference type="SMART" id="SM00721">
    <property type="entry name" value="BAR"/>
    <property type="match status" value="1"/>
</dbReference>
<dbReference type="SMART" id="SM00233">
    <property type="entry name" value="PH"/>
    <property type="match status" value="1"/>
</dbReference>
<dbReference type="SUPFAM" id="SSF48403">
    <property type="entry name" value="Ankyrin repeat"/>
    <property type="match status" value="1"/>
</dbReference>
<dbReference type="SUPFAM" id="SSF57863">
    <property type="entry name" value="ArfGap/RecO-like zinc finger"/>
    <property type="match status" value="1"/>
</dbReference>
<dbReference type="SUPFAM" id="SSF103657">
    <property type="entry name" value="BAR/IMD domain-like"/>
    <property type="match status" value="1"/>
</dbReference>
<dbReference type="SUPFAM" id="SSF50729">
    <property type="entry name" value="PH domain-like"/>
    <property type="match status" value="1"/>
</dbReference>
<dbReference type="PROSITE" id="PS50297">
    <property type="entry name" value="ANK_REP_REGION"/>
    <property type="match status" value="1"/>
</dbReference>
<dbReference type="PROSITE" id="PS50088">
    <property type="entry name" value="ANK_REPEAT"/>
    <property type="match status" value="2"/>
</dbReference>
<dbReference type="PROSITE" id="PS50115">
    <property type="entry name" value="ARFGAP"/>
    <property type="match status" value="1"/>
</dbReference>
<dbReference type="PROSITE" id="PS50003">
    <property type="entry name" value="PH_DOMAIN"/>
    <property type="match status" value="1"/>
</dbReference>
<comment type="function">
    <text evidence="1">Probable GTPase-activating protein.</text>
</comment>
<comment type="tissue specificity">
    <text evidence="5">Expressed in roots, hypocotyls, cotyledons, leaf and shoot apical meristems and siliques.</text>
</comment>
<comment type="sequence caution" evidence="6">
    <conflict type="miscellaneous discrepancy">
        <sequence resource="EMBL-CDS" id="BAC43344"/>
    </conflict>
    <text>Intron retention.</text>
</comment>
<sequence length="776" mass="87803">MAGFINLEDSPMFQKQVFSLEGTSDELKDRCQKLYKGVKKFMGALGEASTGVSAFADSLEEFGAGHDDPVSVSIGGPVISKFINTLRELSSYKEFLRSQVEHVLLERLTNFMTVDLQEAKESRRRFDKAVHSYDQAREKFVSLKKNTRGDIVAELEEDLENSKSAFEKSRFNLVNSLMTIEAKKKYEFLESISAIMDSHFKYFKLGYDLLSQLEPYIHQVLTYAQQSKEQSKIEQDRFAQRIQEFRTQSELDSQQASAKADPSDVGGNHVYRAIPRKNVEANSVSTADKEVTKQGYLLKRSASLRADWKRRFFVLDNHGSLYYYRNTGNKSAKSQHYYSGLGEHSSGVFGRFRTRHNRSASQGSLDCNMIDLRTSLIKLDAEDTDLRLCFRIISPQKTYTLQAENGADRMDWVNKITAAITIRLNSHFLQQSPARYLDKKNTSSGPATENLTLNQKEDYNQRLNVGDDVLTILREIPGNNTCAECNAPDPDWASLNLGVLMCIECSGVHRNLGVHISKVRSLTLDVKVWEPTILDLFRNLGNGYCNSVWEELLHHLDDDSEKGSTDTLASVSKPSSEDWFTLKEKYINGKYLEKALVVKDEREANSTASSRIWEAVQSRNIRDIYRLIVKADANIINTKFDDITDLDVYHHHHVDAPDEVKKRHDPNACQRIKNSNEARNCLQGCSLLHVACQSGDPILLELLLQFGADINMRDYHGRTPLHHCIASGNNAFAKVLLRRGARPSIEDGGGLSVLERAMEMGAITDEELFLLLAECQ</sequence>
<feature type="chain" id="PRO_0000352496" description="ADP-ribosylation factor GTPase-activating protein AGD2">
    <location>
        <begin position="1"/>
        <end position="776"/>
    </location>
</feature>
<feature type="domain" description="BAR">
    <location>
        <begin position="2"/>
        <end position="226"/>
    </location>
</feature>
<feature type="domain" description="PH" evidence="2">
    <location>
        <begin position="290"/>
        <end position="421"/>
    </location>
</feature>
<feature type="domain" description="Arf-GAP" evidence="3">
    <location>
        <begin position="467"/>
        <end position="604"/>
    </location>
</feature>
<feature type="repeat" description="ANK 1">
    <location>
        <begin position="683"/>
        <end position="712"/>
    </location>
</feature>
<feature type="repeat" description="ANK 2">
    <location>
        <begin position="716"/>
        <end position="745"/>
    </location>
</feature>
<feature type="zinc finger region" description="C4-type" evidence="3">
    <location>
        <begin position="482"/>
        <end position="505"/>
    </location>
</feature>
<feature type="region of interest" description="Disordered" evidence="4">
    <location>
        <begin position="248"/>
        <end position="267"/>
    </location>
</feature>
<keyword id="KW-0040">ANK repeat</keyword>
<keyword id="KW-0175">Coiled coil</keyword>
<keyword id="KW-0343">GTPase activation</keyword>
<keyword id="KW-0479">Metal-binding</keyword>
<keyword id="KW-1185">Reference proteome</keyword>
<keyword id="KW-0677">Repeat</keyword>
<keyword id="KW-0862">Zinc</keyword>
<keyword id="KW-0863">Zinc-finger</keyword>
<gene>
    <name type="primary">AGD2</name>
    <name type="ordered locus">At1g60860</name>
    <name type="ORF">F23C21.2</name>
    <name type="ORF">T7P1.1</name>
</gene>
<organism>
    <name type="scientific">Arabidopsis thaliana</name>
    <name type="common">Mouse-ear cress</name>
    <dbReference type="NCBI Taxonomy" id="3702"/>
    <lineage>
        <taxon>Eukaryota</taxon>
        <taxon>Viridiplantae</taxon>
        <taxon>Streptophyta</taxon>
        <taxon>Embryophyta</taxon>
        <taxon>Tracheophyta</taxon>
        <taxon>Spermatophyta</taxon>
        <taxon>Magnoliopsida</taxon>
        <taxon>eudicotyledons</taxon>
        <taxon>Gunneridae</taxon>
        <taxon>Pentapetalae</taxon>
        <taxon>rosids</taxon>
        <taxon>malvids</taxon>
        <taxon>Brassicales</taxon>
        <taxon>Brassicaceae</taxon>
        <taxon>Camelineae</taxon>
        <taxon>Arabidopsis</taxon>
    </lineage>
</organism>
<evidence type="ECO:0000250" key="1"/>
<evidence type="ECO:0000255" key="2">
    <source>
        <dbReference type="PROSITE-ProRule" id="PRU00145"/>
    </source>
</evidence>
<evidence type="ECO:0000255" key="3">
    <source>
        <dbReference type="PROSITE-ProRule" id="PRU00288"/>
    </source>
</evidence>
<evidence type="ECO:0000256" key="4">
    <source>
        <dbReference type="SAM" id="MobiDB-lite"/>
    </source>
</evidence>
<evidence type="ECO:0000269" key="5">
    <source>
    </source>
</evidence>
<evidence type="ECO:0000305" key="6"/>
<name>AGD2_ARATH</name>
<reference key="1">
    <citation type="journal article" date="2000" name="Nature">
        <title>Sequence and analysis of chromosome 1 of the plant Arabidopsis thaliana.</title>
        <authorList>
            <person name="Theologis A."/>
            <person name="Ecker J.R."/>
            <person name="Palm C.J."/>
            <person name="Federspiel N.A."/>
            <person name="Kaul S."/>
            <person name="White O."/>
            <person name="Alonso J."/>
            <person name="Altafi H."/>
            <person name="Araujo R."/>
            <person name="Bowman C.L."/>
            <person name="Brooks S.Y."/>
            <person name="Buehler E."/>
            <person name="Chan A."/>
            <person name="Chao Q."/>
            <person name="Chen H."/>
            <person name="Cheuk R.F."/>
            <person name="Chin C.W."/>
            <person name="Chung M.K."/>
            <person name="Conn L."/>
            <person name="Conway A.B."/>
            <person name="Conway A.R."/>
            <person name="Creasy T.H."/>
            <person name="Dewar K."/>
            <person name="Dunn P."/>
            <person name="Etgu P."/>
            <person name="Feldblyum T.V."/>
            <person name="Feng J.-D."/>
            <person name="Fong B."/>
            <person name="Fujii C.Y."/>
            <person name="Gill J.E."/>
            <person name="Goldsmith A.D."/>
            <person name="Haas B."/>
            <person name="Hansen N.F."/>
            <person name="Hughes B."/>
            <person name="Huizar L."/>
            <person name="Hunter J.L."/>
            <person name="Jenkins J."/>
            <person name="Johnson-Hopson C."/>
            <person name="Khan S."/>
            <person name="Khaykin E."/>
            <person name="Kim C.J."/>
            <person name="Koo H.L."/>
            <person name="Kremenetskaia I."/>
            <person name="Kurtz D.B."/>
            <person name="Kwan A."/>
            <person name="Lam B."/>
            <person name="Langin-Hooper S."/>
            <person name="Lee A."/>
            <person name="Lee J.M."/>
            <person name="Lenz C.A."/>
            <person name="Li J.H."/>
            <person name="Li Y.-P."/>
            <person name="Lin X."/>
            <person name="Liu S.X."/>
            <person name="Liu Z.A."/>
            <person name="Luros J.S."/>
            <person name="Maiti R."/>
            <person name="Marziali A."/>
            <person name="Militscher J."/>
            <person name="Miranda M."/>
            <person name="Nguyen M."/>
            <person name="Nierman W.C."/>
            <person name="Osborne B.I."/>
            <person name="Pai G."/>
            <person name="Peterson J."/>
            <person name="Pham P.K."/>
            <person name="Rizzo M."/>
            <person name="Rooney T."/>
            <person name="Rowley D."/>
            <person name="Sakano H."/>
            <person name="Salzberg S.L."/>
            <person name="Schwartz J.R."/>
            <person name="Shinn P."/>
            <person name="Southwick A.M."/>
            <person name="Sun H."/>
            <person name="Tallon L.J."/>
            <person name="Tambunga G."/>
            <person name="Toriumi M.J."/>
            <person name="Town C.D."/>
            <person name="Utterback T."/>
            <person name="Van Aken S."/>
            <person name="Vaysberg M."/>
            <person name="Vysotskaia V.S."/>
            <person name="Walker M."/>
            <person name="Wu D."/>
            <person name="Yu G."/>
            <person name="Fraser C.M."/>
            <person name="Venter J.C."/>
            <person name="Davis R.W."/>
        </authorList>
    </citation>
    <scope>NUCLEOTIDE SEQUENCE [LARGE SCALE GENOMIC DNA]</scope>
    <source>
        <strain>cv. Columbia</strain>
    </source>
</reference>
<reference key="2">
    <citation type="journal article" date="2017" name="Plant J.">
        <title>Araport11: a complete reannotation of the Arabidopsis thaliana reference genome.</title>
        <authorList>
            <person name="Cheng C.Y."/>
            <person name="Krishnakumar V."/>
            <person name="Chan A.P."/>
            <person name="Thibaud-Nissen F."/>
            <person name="Schobel S."/>
            <person name="Town C.D."/>
        </authorList>
    </citation>
    <scope>GENOME REANNOTATION</scope>
    <source>
        <strain>cv. Columbia</strain>
    </source>
</reference>
<reference key="3">
    <citation type="journal article" date="2002" name="Science">
        <title>Functional annotation of a full-length Arabidopsis cDNA collection.</title>
        <authorList>
            <person name="Seki M."/>
            <person name="Narusaka M."/>
            <person name="Kamiya A."/>
            <person name="Ishida J."/>
            <person name="Satou M."/>
            <person name="Sakurai T."/>
            <person name="Nakajima M."/>
            <person name="Enju A."/>
            <person name="Akiyama K."/>
            <person name="Oono Y."/>
            <person name="Muramatsu M."/>
            <person name="Hayashizaki Y."/>
            <person name="Kawai J."/>
            <person name="Carninci P."/>
            <person name="Itoh M."/>
            <person name="Ishii Y."/>
            <person name="Arakawa T."/>
            <person name="Shibata K."/>
            <person name="Shinagawa A."/>
            <person name="Shinozaki K."/>
        </authorList>
    </citation>
    <scope>NUCLEOTIDE SEQUENCE [LARGE SCALE MRNA]</scope>
    <source>
        <strain>cv. Columbia</strain>
    </source>
</reference>
<reference key="4">
    <citation type="journal article" date="2003" name="Plant Physiol.">
        <title>Analysis of the small GTPase gene superfamily of Arabidopsis.</title>
        <authorList>
            <person name="Vernoud V."/>
            <person name="Horton A.C."/>
            <person name="Yang Z."/>
            <person name="Nielsen E."/>
        </authorList>
    </citation>
    <scope>GENE FAMILY</scope>
    <scope>NOMENCLATURE</scope>
</reference>
<reference key="5">
    <citation type="journal article" date="2006" name="Plant Cell">
        <title>SCARFACE encodes an ARF-GAP that is required for normal auxin efflux and vein patterning in Arabidopsis.</title>
        <authorList>
            <person name="Sieburth L.E."/>
            <person name="Muday G.K."/>
            <person name="King E.J."/>
            <person name="Benton G."/>
            <person name="Kim S."/>
            <person name="Metcalf K.E."/>
            <person name="Meyers L."/>
            <person name="Seamen E."/>
            <person name="Van Norman J.M."/>
        </authorList>
    </citation>
    <scope>TISSUE SPECIFICITY</scope>
</reference>
<protein>
    <recommendedName>
        <fullName>ADP-ribosylation factor GTPase-activating protein AGD2</fullName>
        <shortName>ARF GAP AGD2</shortName>
    </recommendedName>
    <alternativeName>
        <fullName>Protein ARF-GAP DOMAIN 2</fullName>
        <shortName>AtAGD2</shortName>
    </alternativeName>
</protein>